<name>NIFH_TRIAZ</name>
<accession>P0A3S2</accession>
<accession>O08050</accession>
<accession>Q43886</accession>
<evidence type="ECO:0000250" key="1"/>
<evidence type="ECO:0000255" key="2"/>
<evidence type="ECO:0000305" key="3"/>
<sequence length="295" mass="32230">MTDENIRQIAFYGKGGIGKSTTSQNTLAAMAEMGQRIMIVGCDPKADSTRLMLHAKAQTTVLHLAAERGAVEDLELHEVMLTGFRGVRCVESGGPEPGVGCAGRGIITAINFLEENGAYQDLDFVSYDVLGDVVCGGFAMPIREGKAQEIYIVTSGEMMAMYAANNIARGILKYAHSGGVRLGGLICNSRKTDREAELIENLAERLNTQMIHFVPRDNIVQHAELRRMTVNEYAPDSNQGQEYRALAKKIINNDKLTIPTPIEMDELEALLIEYGILDDDSKHAEIIGKPAEATK</sequence>
<organism>
    <name type="scientific">Trichormus azollae</name>
    <name type="common">Anabaena azollae</name>
    <dbReference type="NCBI Taxonomy" id="1164"/>
    <lineage>
        <taxon>Bacteria</taxon>
        <taxon>Bacillati</taxon>
        <taxon>Cyanobacteriota</taxon>
        <taxon>Cyanophyceae</taxon>
        <taxon>Nostocales</taxon>
        <taxon>Nostocaceae</taxon>
        <taxon>Trichormus</taxon>
    </lineage>
</organism>
<comment type="function">
    <text evidence="1">The key enzymatic reactions in nitrogen fixation are catalyzed by the nitrogenase complex, which has 2 components: the iron protein and the molybdenum-iron protein.</text>
</comment>
<comment type="catalytic activity">
    <reaction>
        <text>N2 + 8 reduced [2Fe-2S]-[ferredoxin] + 16 ATP + 16 H2O = H2 + 8 oxidized [2Fe-2S]-[ferredoxin] + 2 NH4(+) + 16 ADP + 16 phosphate + 6 H(+)</text>
        <dbReference type="Rhea" id="RHEA:21448"/>
        <dbReference type="Rhea" id="RHEA-COMP:10000"/>
        <dbReference type="Rhea" id="RHEA-COMP:10001"/>
        <dbReference type="ChEBI" id="CHEBI:15377"/>
        <dbReference type="ChEBI" id="CHEBI:15378"/>
        <dbReference type="ChEBI" id="CHEBI:17997"/>
        <dbReference type="ChEBI" id="CHEBI:18276"/>
        <dbReference type="ChEBI" id="CHEBI:28938"/>
        <dbReference type="ChEBI" id="CHEBI:30616"/>
        <dbReference type="ChEBI" id="CHEBI:33737"/>
        <dbReference type="ChEBI" id="CHEBI:33738"/>
        <dbReference type="ChEBI" id="CHEBI:43474"/>
        <dbReference type="ChEBI" id="CHEBI:456216"/>
        <dbReference type="EC" id="1.18.6.1"/>
    </reaction>
</comment>
<comment type="cofactor">
    <cofactor evidence="1">
        <name>[4Fe-4S] cluster</name>
        <dbReference type="ChEBI" id="CHEBI:49883"/>
    </cofactor>
    <text evidence="1">Binds 1 [4Fe-4S] cluster per dimer.</text>
</comment>
<comment type="subunit">
    <text evidence="1">Homodimer.</text>
</comment>
<comment type="PTM">
    <text evidence="1">The reversible ADP-ribosylation of Arg-104 inactivates the nitrogenase reductase and regulates nitrogenase activity.</text>
</comment>
<comment type="similarity">
    <text evidence="3">Belongs to the NifH/BchL/ChlL family.</text>
</comment>
<feature type="chain" id="PRO_0000139479" description="Nitrogenase iron protein">
    <location>
        <begin position="1"/>
        <end position="295"/>
    </location>
</feature>
<feature type="binding site" evidence="2">
    <location>
        <begin position="13"/>
        <end position="20"/>
    </location>
    <ligand>
        <name>ATP</name>
        <dbReference type="ChEBI" id="CHEBI:30616"/>
    </ligand>
</feature>
<feature type="binding site" evidence="1">
    <location>
        <position position="101"/>
    </location>
    <ligand>
        <name>[4Fe-4S] cluster</name>
        <dbReference type="ChEBI" id="CHEBI:49883"/>
        <note>ligand shared between dimeric partners</note>
    </ligand>
</feature>
<feature type="binding site" evidence="1">
    <location>
        <position position="135"/>
    </location>
    <ligand>
        <name>[4Fe-4S] cluster</name>
        <dbReference type="ChEBI" id="CHEBI:49883"/>
        <note>ligand shared between dimeric partners</note>
    </ligand>
</feature>
<feature type="modified residue" description="ADP-ribosylarginine; by dinitrogenase reductase ADP-ribosyltransferase" evidence="1">
    <location>
        <position position="104"/>
    </location>
</feature>
<gene>
    <name type="primary">nifH</name>
</gene>
<keyword id="KW-0004">4Fe-4S</keyword>
<keyword id="KW-0013">ADP-ribosylation</keyword>
<keyword id="KW-0067">ATP-binding</keyword>
<keyword id="KW-0408">Iron</keyword>
<keyword id="KW-0411">Iron-sulfur</keyword>
<keyword id="KW-0479">Metal-binding</keyword>
<keyword id="KW-0535">Nitrogen fixation</keyword>
<keyword id="KW-0547">Nucleotide-binding</keyword>
<keyword id="KW-0560">Oxidoreductase</keyword>
<dbReference type="EC" id="1.18.6.1"/>
<dbReference type="EMBL" id="L34879">
    <property type="protein sequence ID" value="AAA87251.1"/>
    <property type="molecule type" value="Genomic_DNA"/>
</dbReference>
<dbReference type="SMR" id="P0A3S2"/>
<dbReference type="GO" id="GO:0051539">
    <property type="term" value="F:4 iron, 4 sulfur cluster binding"/>
    <property type="evidence" value="ECO:0007669"/>
    <property type="project" value="UniProtKB-KW"/>
</dbReference>
<dbReference type="GO" id="GO:0005524">
    <property type="term" value="F:ATP binding"/>
    <property type="evidence" value="ECO:0007669"/>
    <property type="project" value="UniProtKB-UniRule"/>
</dbReference>
<dbReference type="GO" id="GO:0046872">
    <property type="term" value="F:metal ion binding"/>
    <property type="evidence" value="ECO:0007669"/>
    <property type="project" value="UniProtKB-KW"/>
</dbReference>
<dbReference type="GO" id="GO:0016163">
    <property type="term" value="F:nitrogenase activity"/>
    <property type="evidence" value="ECO:0007669"/>
    <property type="project" value="UniProtKB-UniRule"/>
</dbReference>
<dbReference type="GO" id="GO:0009399">
    <property type="term" value="P:nitrogen fixation"/>
    <property type="evidence" value="ECO:0007669"/>
    <property type="project" value="UniProtKB-UniRule"/>
</dbReference>
<dbReference type="CDD" id="cd02040">
    <property type="entry name" value="NifH"/>
    <property type="match status" value="1"/>
</dbReference>
<dbReference type="FunFam" id="3.40.50.300:FF:001379">
    <property type="entry name" value="Nitrogenase iron protein 1"/>
    <property type="match status" value="1"/>
</dbReference>
<dbReference type="Gene3D" id="3.40.50.300">
    <property type="entry name" value="P-loop containing nucleotide triphosphate hydrolases"/>
    <property type="match status" value="1"/>
</dbReference>
<dbReference type="HAMAP" id="MF_00533">
    <property type="entry name" value="NifH"/>
    <property type="match status" value="1"/>
</dbReference>
<dbReference type="InterPro" id="IPR030655">
    <property type="entry name" value="NifH/chlL_CS"/>
</dbReference>
<dbReference type="InterPro" id="IPR000392">
    <property type="entry name" value="NifH/frxC"/>
</dbReference>
<dbReference type="InterPro" id="IPR005977">
    <property type="entry name" value="Nitrogenase_Fe_NifH"/>
</dbReference>
<dbReference type="InterPro" id="IPR027417">
    <property type="entry name" value="P-loop_NTPase"/>
</dbReference>
<dbReference type="NCBIfam" id="TIGR01287">
    <property type="entry name" value="nifH"/>
    <property type="match status" value="1"/>
</dbReference>
<dbReference type="PANTHER" id="PTHR42864">
    <property type="entry name" value="LIGHT-INDEPENDENT PROTOCHLOROPHYLLIDE REDUCTASE IRON-SULFUR ATP-BINDING PROTEIN"/>
    <property type="match status" value="1"/>
</dbReference>
<dbReference type="PANTHER" id="PTHR42864:SF2">
    <property type="entry name" value="LIGHT-INDEPENDENT PROTOCHLOROPHYLLIDE REDUCTASE IRON-SULFUR ATP-BINDING PROTEIN"/>
    <property type="match status" value="1"/>
</dbReference>
<dbReference type="Pfam" id="PF00142">
    <property type="entry name" value="Fer4_NifH"/>
    <property type="match status" value="1"/>
</dbReference>
<dbReference type="PIRSF" id="PIRSF000363">
    <property type="entry name" value="Nitrogenase_iron"/>
    <property type="match status" value="1"/>
</dbReference>
<dbReference type="PRINTS" id="PR00091">
    <property type="entry name" value="NITROGNASEII"/>
</dbReference>
<dbReference type="SUPFAM" id="SSF52540">
    <property type="entry name" value="P-loop containing nucleoside triphosphate hydrolases"/>
    <property type="match status" value="1"/>
</dbReference>
<dbReference type="PROSITE" id="PS00746">
    <property type="entry name" value="NIFH_FRXC_1"/>
    <property type="match status" value="1"/>
</dbReference>
<dbReference type="PROSITE" id="PS00692">
    <property type="entry name" value="NIFH_FRXC_2"/>
    <property type="match status" value="1"/>
</dbReference>
<dbReference type="PROSITE" id="PS51026">
    <property type="entry name" value="NIFH_FRXC_3"/>
    <property type="match status" value="1"/>
</dbReference>
<protein>
    <recommendedName>
        <fullName>Nitrogenase iron protein</fullName>
        <ecNumber>1.18.6.1</ecNumber>
    </recommendedName>
    <alternativeName>
        <fullName>Nitrogenase Fe protein</fullName>
    </alternativeName>
    <alternativeName>
        <fullName>Nitrogenase component II</fullName>
    </alternativeName>
    <alternativeName>
        <fullName>Nitrogenase reductase</fullName>
    </alternativeName>
</protein>
<proteinExistence type="inferred from homology"/>
<reference key="1">
    <citation type="journal article" date="1995" name="Microbiology">
        <title>Characterization of a nitrogen-fixation (nif) gene cluster from Anabaena azollae 1a shows that closely related cyanobacteria have highly variable but structured intergenic regions.</title>
        <authorList>
            <person name="Jackman D.M."/>
            <person name="Mulligan M.E."/>
        </authorList>
    </citation>
    <scope>NUCLEOTIDE SEQUENCE [GENOMIC DNA]</scope>
    <source>
        <strain>1a</strain>
    </source>
</reference>